<organism>
    <name type="scientific">Staphylococcus aureus (strain NCTC 8325 / PS 47)</name>
    <dbReference type="NCBI Taxonomy" id="93061"/>
    <lineage>
        <taxon>Bacteria</taxon>
        <taxon>Bacillati</taxon>
        <taxon>Bacillota</taxon>
        <taxon>Bacilli</taxon>
        <taxon>Bacillales</taxon>
        <taxon>Staphylococcaceae</taxon>
        <taxon>Staphylococcus</taxon>
    </lineage>
</organism>
<feature type="signal peptide" evidence="2">
    <location>
        <begin position="1"/>
        <end position="36"/>
    </location>
</feature>
<feature type="chain" id="PRO_0000359585" description="Serine protease SplF">
    <location>
        <begin position="37"/>
        <end position="239"/>
    </location>
</feature>
<feature type="active site" description="Charge relay system" evidence="1">
    <location>
        <position position="75"/>
    </location>
</feature>
<feature type="active site" description="Charge relay system" evidence="1">
    <location>
        <position position="114"/>
    </location>
</feature>
<feature type="active site" description="Charge relay system" evidence="1">
    <location>
        <position position="192"/>
    </location>
</feature>
<name>SPLF_STAA8</name>
<reference key="1">
    <citation type="journal article" date="2001" name="Infect. Immun.">
        <title>Molecular characterization of a novel Staphylococcus aureus serine protease operon.</title>
        <authorList>
            <person name="Reed S.B."/>
            <person name="Wesson C.A."/>
            <person name="Liou L.E."/>
            <person name="Trumble W.R."/>
            <person name="Schlievert P.M."/>
            <person name="Bohach G.A."/>
            <person name="Bayles K.W."/>
        </authorList>
    </citation>
    <scope>NUCLEOTIDE SEQUENCE [GENOMIC DNA]</scope>
    <scope>PROTEIN SEQUENCE OF 37-53</scope>
    <scope>SUBCELLULAR LOCATION</scope>
    <scope>DEVELOPMENTAL STAGE</scope>
    <scope>INDUCTION</scope>
</reference>
<reference key="2">
    <citation type="book" date="2006" name="Gram positive pathogens, 2nd edition">
        <title>The Staphylococcus aureus NCTC 8325 genome.</title>
        <editorList>
            <person name="Fischetti V."/>
            <person name="Novick R."/>
            <person name="Ferretti J."/>
            <person name="Portnoy D."/>
            <person name="Rood J."/>
        </editorList>
        <authorList>
            <person name="Gillaspy A.F."/>
            <person name="Worrell V."/>
            <person name="Orvis J."/>
            <person name="Roe B.A."/>
            <person name="Dyer D.W."/>
            <person name="Iandolo J.J."/>
        </authorList>
    </citation>
    <scope>NUCLEOTIDE SEQUENCE [LARGE SCALE GENOMIC DNA]</scope>
    <source>
        <strain>NCTC 8325 / PS 47</strain>
    </source>
</reference>
<proteinExistence type="evidence at protein level"/>
<protein>
    <recommendedName>
        <fullName>Serine protease SplF</fullName>
        <ecNumber>3.4.21.-</ecNumber>
    </recommendedName>
</protein>
<accession>Q2FXC8</accession>
<accession>Q9KH46</accession>
<comment type="subcellular location">
    <subcellularLocation>
        <location evidence="2">Secreted</location>
    </subcellularLocation>
</comment>
<comment type="developmental stage">
    <text evidence="2">Maximally expressed during early stationary phase.</text>
</comment>
<comment type="induction">
    <text evidence="2">Positively regulated by agr (accessory gene regulator).</text>
</comment>
<comment type="similarity">
    <text evidence="3">Belongs to the peptidase S1B family.</text>
</comment>
<dbReference type="EC" id="3.4.21.-"/>
<dbReference type="EMBL" id="AF271715">
    <property type="protein sequence ID" value="AAF97930.1"/>
    <property type="molecule type" value="Genomic_DNA"/>
</dbReference>
<dbReference type="EMBL" id="CP000253">
    <property type="protein sequence ID" value="ABD30998.1"/>
    <property type="molecule type" value="Genomic_DNA"/>
</dbReference>
<dbReference type="RefSeq" id="WP_001038688.1">
    <property type="nucleotide sequence ID" value="NZ_LS483365.1"/>
</dbReference>
<dbReference type="RefSeq" id="YP_500436.1">
    <property type="nucleotide sequence ID" value="NC_007795.1"/>
</dbReference>
<dbReference type="PDB" id="6SF7">
    <property type="method" value="X-ray"/>
    <property type="resolution" value="1.70 A"/>
    <property type="chains" value="A/B/C/D=37-239"/>
</dbReference>
<dbReference type="PDBsum" id="6SF7"/>
<dbReference type="SMR" id="Q2FXC8"/>
<dbReference type="STRING" id="93061.SAOUHSC_01935"/>
<dbReference type="MEROPS" id="S01.526"/>
<dbReference type="PaxDb" id="1280-SAXN108_1841"/>
<dbReference type="GeneID" id="3921019"/>
<dbReference type="KEGG" id="sao:SAOUHSC_01935"/>
<dbReference type="PATRIC" id="fig|93061.5.peg.1762"/>
<dbReference type="eggNOG" id="COG3591">
    <property type="taxonomic scope" value="Bacteria"/>
</dbReference>
<dbReference type="HOGENOM" id="CLU_073589_2_0_9"/>
<dbReference type="OrthoDB" id="2396730at2"/>
<dbReference type="PHI-base" id="PHI:11226"/>
<dbReference type="PRO" id="PR:Q2FXC8"/>
<dbReference type="Proteomes" id="UP000008816">
    <property type="component" value="Chromosome"/>
</dbReference>
<dbReference type="GO" id="GO:0005576">
    <property type="term" value="C:extracellular region"/>
    <property type="evidence" value="ECO:0007669"/>
    <property type="project" value="UniProtKB-SubCell"/>
</dbReference>
<dbReference type="GO" id="GO:0008236">
    <property type="term" value="F:serine-type peptidase activity"/>
    <property type="evidence" value="ECO:0007669"/>
    <property type="project" value="UniProtKB-KW"/>
</dbReference>
<dbReference type="GO" id="GO:0006508">
    <property type="term" value="P:proteolysis"/>
    <property type="evidence" value="ECO:0007669"/>
    <property type="project" value="UniProtKB-KW"/>
</dbReference>
<dbReference type="Gene3D" id="2.40.10.10">
    <property type="entry name" value="Trypsin-like serine proteases"/>
    <property type="match status" value="2"/>
</dbReference>
<dbReference type="InterPro" id="IPR009003">
    <property type="entry name" value="Peptidase_S1_PA"/>
</dbReference>
<dbReference type="InterPro" id="IPR043504">
    <property type="entry name" value="Peptidase_S1_PA_chymotrypsin"/>
</dbReference>
<dbReference type="InterPro" id="IPR008256">
    <property type="entry name" value="Peptidase_S1B"/>
</dbReference>
<dbReference type="InterPro" id="IPR028301">
    <property type="entry name" value="V8_his_AS"/>
</dbReference>
<dbReference type="PANTHER" id="PTHR43019:SF23">
    <property type="entry name" value="PROTEASE DO-LIKE 5, CHLOROPLASTIC"/>
    <property type="match status" value="1"/>
</dbReference>
<dbReference type="PANTHER" id="PTHR43019">
    <property type="entry name" value="SERINE ENDOPROTEASE DEGS"/>
    <property type="match status" value="1"/>
</dbReference>
<dbReference type="Pfam" id="PF13365">
    <property type="entry name" value="Trypsin_2"/>
    <property type="match status" value="1"/>
</dbReference>
<dbReference type="PRINTS" id="PR00839">
    <property type="entry name" value="V8PROTEASE"/>
</dbReference>
<dbReference type="SUPFAM" id="SSF50494">
    <property type="entry name" value="Trypsin-like serine proteases"/>
    <property type="match status" value="1"/>
</dbReference>
<dbReference type="PROSITE" id="PS00672">
    <property type="entry name" value="V8_HIS"/>
    <property type="match status" value="1"/>
</dbReference>
<gene>
    <name type="primary">splF</name>
    <name type="ordered locus">SAOUHSC_01935</name>
</gene>
<keyword id="KW-0002">3D-structure</keyword>
<keyword id="KW-0903">Direct protein sequencing</keyword>
<keyword id="KW-0378">Hydrolase</keyword>
<keyword id="KW-0645">Protease</keyword>
<keyword id="KW-1185">Reference proteome</keyword>
<keyword id="KW-0964">Secreted</keyword>
<keyword id="KW-0720">Serine protease</keyword>
<keyword id="KW-0732">Signal</keyword>
<evidence type="ECO:0000250" key="1"/>
<evidence type="ECO:0000269" key="2">
    <source>
    </source>
</evidence>
<evidence type="ECO:0000305" key="3"/>
<sequence length="239" mass="25655">MNKNIIIKSIAALTILTSITGVGTTMVEGIQQTAKAENTVKQITNTNVAPYSGVTWMGAGTGFVVGNHTIITNKHVTYHMKVGDEIKAHPNGFYNNGGGLYKVTKIVDYPGKEDIAVVQVEEKSTQPKGRKFKDFTSKFNIASEAKENEPISVIGYPNPNGNKLQMYESTGKVLSVNGNIVSSDAIIQPGSSGSPILNSKHEAIGVIYAGNKPSGESTRGFAVYFSPEIKKFIADNLDK</sequence>